<dbReference type="EMBL" id="CP000411">
    <property type="protein sequence ID" value="ABJ56538.1"/>
    <property type="molecule type" value="Genomic_DNA"/>
</dbReference>
<dbReference type="RefSeq" id="WP_002818456.1">
    <property type="nucleotide sequence ID" value="NC_008528.1"/>
</dbReference>
<dbReference type="SMR" id="Q04G84"/>
<dbReference type="STRING" id="203123.OEOE_0596"/>
<dbReference type="GeneID" id="75065418"/>
<dbReference type="KEGG" id="ooe:OEOE_0596"/>
<dbReference type="eggNOG" id="COG0088">
    <property type="taxonomic scope" value="Bacteria"/>
</dbReference>
<dbReference type="HOGENOM" id="CLU_041575_5_2_9"/>
<dbReference type="Proteomes" id="UP000000774">
    <property type="component" value="Chromosome"/>
</dbReference>
<dbReference type="GO" id="GO:1990904">
    <property type="term" value="C:ribonucleoprotein complex"/>
    <property type="evidence" value="ECO:0007669"/>
    <property type="project" value="UniProtKB-KW"/>
</dbReference>
<dbReference type="GO" id="GO:0005840">
    <property type="term" value="C:ribosome"/>
    <property type="evidence" value="ECO:0007669"/>
    <property type="project" value="UniProtKB-KW"/>
</dbReference>
<dbReference type="GO" id="GO:0019843">
    <property type="term" value="F:rRNA binding"/>
    <property type="evidence" value="ECO:0007669"/>
    <property type="project" value="UniProtKB-UniRule"/>
</dbReference>
<dbReference type="GO" id="GO:0003735">
    <property type="term" value="F:structural constituent of ribosome"/>
    <property type="evidence" value="ECO:0007669"/>
    <property type="project" value="InterPro"/>
</dbReference>
<dbReference type="GO" id="GO:0006412">
    <property type="term" value="P:translation"/>
    <property type="evidence" value="ECO:0007669"/>
    <property type="project" value="UniProtKB-UniRule"/>
</dbReference>
<dbReference type="Gene3D" id="3.40.1370.10">
    <property type="match status" value="1"/>
</dbReference>
<dbReference type="HAMAP" id="MF_01328_B">
    <property type="entry name" value="Ribosomal_uL4_B"/>
    <property type="match status" value="1"/>
</dbReference>
<dbReference type="InterPro" id="IPR002136">
    <property type="entry name" value="Ribosomal_uL4"/>
</dbReference>
<dbReference type="InterPro" id="IPR013005">
    <property type="entry name" value="Ribosomal_uL4-like"/>
</dbReference>
<dbReference type="InterPro" id="IPR023574">
    <property type="entry name" value="Ribosomal_uL4_dom_sf"/>
</dbReference>
<dbReference type="NCBIfam" id="TIGR03953">
    <property type="entry name" value="rplD_bact"/>
    <property type="match status" value="1"/>
</dbReference>
<dbReference type="PANTHER" id="PTHR10746">
    <property type="entry name" value="50S RIBOSOMAL PROTEIN L4"/>
    <property type="match status" value="1"/>
</dbReference>
<dbReference type="PANTHER" id="PTHR10746:SF6">
    <property type="entry name" value="LARGE RIBOSOMAL SUBUNIT PROTEIN UL4M"/>
    <property type="match status" value="1"/>
</dbReference>
<dbReference type="Pfam" id="PF00573">
    <property type="entry name" value="Ribosomal_L4"/>
    <property type="match status" value="1"/>
</dbReference>
<dbReference type="SUPFAM" id="SSF52166">
    <property type="entry name" value="Ribosomal protein L4"/>
    <property type="match status" value="1"/>
</dbReference>
<comment type="function">
    <text evidence="1">One of the primary rRNA binding proteins, this protein initially binds near the 5'-end of the 23S rRNA. It is important during the early stages of 50S assembly. It makes multiple contacts with different domains of the 23S rRNA in the assembled 50S subunit and ribosome.</text>
</comment>
<comment type="function">
    <text evidence="1">Forms part of the polypeptide exit tunnel.</text>
</comment>
<comment type="subunit">
    <text evidence="1">Part of the 50S ribosomal subunit.</text>
</comment>
<comment type="similarity">
    <text evidence="1">Belongs to the universal ribosomal protein uL4 family.</text>
</comment>
<keyword id="KW-1185">Reference proteome</keyword>
<keyword id="KW-0687">Ribonucleoprotein</keyword>
<keyword id="KW-0689">Ribosomal protein</keyword>
<keyword id="KW-0694">RNA-binding</keyword>
<keyword id="KW-0699">rRNA-binding</keyword>
<evidence type="ECO:0000255" key="1">
    <source>
        <dbReference type="HAMAP-Rule" id="MF_01328"/>
    </source>
</evidence>
<evidence type="ECO:0000256" key="2">
    <source>
        <dbReference type="SAM" id="MobiDB-lite"/>
    </source>
</evidence>
<evidence type="ECO:0000305" key="3"/>
<feature type="chain" id="PRO_1000052456" description="Large ribosomal subunit protein uL4">
    <location>
        <begin position="1"/>
        <end position="207"/>
    </location>
</feature>
<feature type="region of interest" description="Disordered" evidence="2">
    <location>
        <begin position="45"/>
        <end position="77"/>
    </location>
</feature>
<feature type="compositionally biased region" description="Polar residues" evidence="2">
    <location>
        <begin position="45"/>
        <end position="57"/>
    </location>
</feature>
<name>RL4_OENOB</name>
<organism>
    <name type="scientific">Oenococcus oeni (strain ATCC BAA-331 / PSU-1)</name>
    <dbReference type="NCBI Taxonomy" id="203123"/>
    <lineage>
        <taxon>Bacteria</taxon>
        <taxon>Bacillati</taxon>
        <taxon>Bacillota</taxon>
        <taxon>Bacilli</taxon>
        <taxon>Lactobacillales</taxon>
        <taxon>Lactobacillaceae</taxon>
        <taxon>Oenococcus</taxon>
    </lineage>
</organism>
<proteinExistence type="inferred from homology"/>
<gene>
    <name evidence="1" type="primary">rplD</name>
    <name type="ordered locus">OEOE_0596</name>
</gene>
<protein>
    <recommendedName>
        <fullName evidence="1">Large ribosomal subunit protein uL4</fullName>
    </recommendedName>
    <alternativeName>
        <fullName evidence="3">50S ribosomal protein L4</fullName>
    </alternativeName>
</protein>
<sequence length="207" mass="22445">MTKVALYKQDGTQAGEVELADSIFAIEPNEAVVTDAVLMQRASLRQGTHSVKNRSTVSGGGRKPWRQKGTGNARQGSIRAPQWRGGAISMGPIPRPYAYKINRKAYRLALKSVLSDKVSAKNFVIIDELNFEKPSTKAIADSLNKLEATKKTLLVVDDANENAKLSARNLPNVQVTTASGVNVYDLVKAQKVVIVQSAVKQVEEVLG</sequence>
<accession>Q04G84</accession>
<reference key="1">
    <citation type="journal article" date="2006" name="Proc. Natl. Acad. Sci. U.S.A.">
        <title>Comparative genomics of the lactic acid bacteria.</title>
        <authorList>
            <person name="Makarova K.S."/>
            <person name="Slesarev A."/>
            <person name="Wolf Y.I."/>
            <person name="Sorokin A."/>
            <person name="Mirkin B."/>
            <person name="Koonin E.V."/>
            <person name="Pavlov A."/>
            <person name="Pavlova N."/>
            <person name="Karamychev V."/>
            <person name="Polouchine N."/>
            <person name="Shakhova V."/>
            <person name="Grigoriev I."/>
            <person name="Lou Y."/>
            <person name="Rohksar D."/>
            <person name="Lucas S."/>
            <person name="Huang K."/>
            <person name="Goodstein D.M."/>
            <person name="Hawkins T."/>
            <person name="Plengvidhya V."/>
            <person name="Welker D."/>
            <person name="Hughes J."/>
            <person name="Goh Y."/>
            <person name="Benson A."/>
            <person name="Baldwin K."/>
            <person name="Lee J.-H."/>
            <person name="Diaz-Muniz I."/>
            <person name="Dosti B."/>
            <person name="Smeianov V."/>
            <person name="Wechter W."/>
            <person name="Barabote R."/>
            <person name="Lorca G."/>
            <person name="Altermann E."/>
            <person name="Barrangou R."/>
            <person name="Ganesan B."/>
            <person name="Xie Y."/>
            <person name="Rawsthorne H."/>
            <person name="Tamir D."/>
            <person name="Parker C."/>
            <person name="Breidt F."/>
            <person name="Broadbent J.R."/>
            <person name="Hutkins R."/>
            <person name="O'Sullivan D."/>
            <person name="Steele J."/>
            <person name="Unlu G."/>
            <person name="Saier M.H. Jr."/>
            <person name="Klaenhammer T."/>
            <person name="Richardson P."/>
            <person name="Kozyavkin S."/>
            <person name="Weimer B.C."/>
            <person name="Mills D.A."/>
        </authorList>
    </citation>
    <scope>NUCLEOTIDE SEQUENCE [LARGE SCALE GENOMIC DNA]</scope>
    <source>
        <strain>ATCC BAA-331 / PSU-1</strain>
    </source>
</reference>